<sequence length="430" mass="47684">MALDVQSDIVAYDAPKKDLYEIGEMPPLGHVPKEMYAWAIRRERHGEPDQAMQIEVVETPSIDSHEVLVLVMAAGVNYNGIWAGLGVPVSPFDGHKQPYHIAGSDASGIVWAVGDKVKRWKVGDEVVIHCNQDDGDDEECNGGDPMFSPTQRIWGYETPDGSFAQFTRVQAQQLMKRPKHLTWEEAACYTLTLATAYRMLFGHKPHDLKPGQNVLVWGASGGLGSYAIQLINTAGANAIGVISEEDKRDFVMGLGAKGVINRKDFKCWGQLPKVNSPEYNEWLKEARKFGKAIWDITGKGINVDMVFEHPGEATFPVSSLVVKKGGMVVICAGTTGFNCTFDVRYMWMHQKRLQGSHFANLKQASAANQLMIERRLDPCMSEVFPWAEIPAAHTKMYRNQHKPGNMAVLVQAPRTGLRTFADVLEAGRKA</sequence>
<name>CCCR_CERS4</name>
<reference key="1">
    <citation type="journal article" date="2007" name="Proc. Natl. Acad. Sci. U.S.A.">
        <title>Synthesis of C5-dicarboxylic acids from C2-units involving crotonyl-CoA carboxylase/reductase: the ethylmalonyl-CoA pathway.</title>
        <authorList>
            <person name="Erb T.J."/>
            <person name="Berg I.A."/>
            <person name="Brecht V."/>
            <person name="Muller M."/>
            <person name="Fuchs G."/>
            <person name="Alber B.E."/>
        </authorList>
    </citation>
    <scope>NUCLEOTIDE SEQUENCE [GENOMIC DNA]</scope>
    <scope>FUNCTION</scope>
    <scope>CATALYTIC ACTIVITY</scope>
    <scope>BIOPHYSICOCHEMICAL PROPERTIES</scope>
    <scope>SUBUNIT</scope>
    <scope>LACK OF METAL BINDING</scope>
    <scope>INDUCTION</scope>
    <source>
        <strain>ATCC 17023 / DSM 158 / JCM 6121 / CCUG 31486 / LMG 2827 / NBRC 12203 / NCIMB 8253 / ATH 2.4.1.</strain>
    </source>
</reference>
<reference key="2">
    <citation type="submission" date="2005-09" db="EMBL/GenBank/DDBJ databases">
        <title>Complete sequence of chromosome 1 of Rhodobacter sphaeroides 2.4.1.</title>
        <authorList>
            <person name="Copeland A."/>
            <person name="Lucas S."/>
            <person name="Lapidus A."/>
            <person name="Barry K."/>
            <person name="Detter J.C."/>
            <person name="Glavina T."/>
            <person name="Hammon N."/>
            <person name="Israni S."/>
            <person name="Pitluck S."/>
            <person name="Richardson P."/>
            <person name="Mackenzie C."/>
            <person name="Choudhary M."/>
            <person name="Larimer F."/>
            <person name="Hauser L.J."/>
            <person name="Land M."/>
            <person name="Donohue T.J."/>
            <person name="Kaplan S."/>
        </authorList>
    </citation>
    <scope>NUCLEOTIDE SEQUENCE [LARGE SCALE GENOMIC DNA]</scope>
    <source>
        <strain>ATCC 17023 / DSM 158 / JCM 6121 / CCUG 31486 / LMG 2827 / NBRC 12203 / NCIMB 8253 / ATH 2.4.1.</strain>
    </source>
</reference>
<reference key="3">
    <citation type="journal article" date="2008" name="J. Biol. Chem.">
        <title>Ethylmalonyl-CoA mutase from Rhodobacter sphaeroides defines a new subclade of coenzyme B12-dependent acyl-CoA mutases.</title>
        <authorList>
            <person name="Erb T.J."/>
            <person name="Retey J."/>
            <person name="Fuchs G."/>
            <person name="Alber B.E."/>
        </authorList>
    </citation>
    <scope>FUNCTION</scope>
    <scope>CATALYTIC ACTIVITY</scope>
    <source>
        <strain>ATCC 17023 / DSM 158 / JCM 6121 / CCUG 31486 / LMG 2827 / NBRC 12203 / NCIMB 8253 / ATH 2.4.1.</strain>
    </source>
</reference>
<reference key="4">
    <citation type="journal article" date="2009" name="Proc. Natl. Acad. Sci. U.S.A.">
        <title>Carboxylation mechanism and stereochemistry of crotonyl-CoA carboxylase/reductase, a carboxylating enoyl-thioester reductase.</title>
        <authorList>
            <person name="Erb T.J."/>
            <person name="Brecht V."/>
            <person name="Fuchs G."/>
            <person name="Mueller M."/>
            <person name="Alber B.E."/>
        </authorList>
    </citation>
    <scope>FUNCTION</scope>
    <scope>CATALYTIC ACTIVITY</scope>
    <scope>BIOPHYSICOCHEMICAL PROPERTIES</scope>
    <scope>REACTION MECHANISM</scope>
    <source>
        <strain>ATCC 17023 / DSM 158 / JCM 6121 / CCUG 31486 / LMG 2827 / NBRC 12203 / NCIMB 8253 / ATH 2.4.1.</strain>
    </source>
</reference>
<reference key="5">
    <citation type="journal article" date="2012" name="J. Bacteriol.">
        <title>Rhodobacter sphaeroides uses a reductive route via propionyl coenzyme A to assimilate 3-hydroxypropionate.</title>
        <authorList>
            <person name="Schneider K."/>
            <person name="Asao M."/>
            <person name="Carter M.S."/>
            <person name="Alber B.E."/>
        </authorList>
    </citation>
    <scope>DISRUPTION PHENOTYPE</scope>
    <scope>FUNCTION</scope>
    <source>
        <strain>ATCC 17023 / DSM 158 / JCM 6121 / CCUG 31486 / LMG 2827 / NBRC 12203 / NCIMB 8253 / ATH 2.4.1.</strain>
    </source>
</reference>
<proteinExistence type="evidence at protein level"/>
<dbReference type="EC" id="1.3.1.85" evidence="1 2 3"/>
<dbReference type="EMBL" id="FJ445411">
    <property type="protein sequence ID" value="ACJ71669.1"/>
    <property type="molecule type" value="Genomic_DNA"/>
</dbReference>
<dbReference type="EMBL" id="CP000143">
    <property type="protein sequence ID" value="ABA80143.1"/>
    <property type="molecule type" value="Genomic_DNA"/>
</dbReference>
<dbReference type="RefSeq" id="YP_354044.1">
    <property type="nucleotide sequence ID" value="NC_007493.2"/>
</dbReference>
<dbReference type="SMR" id="Q3IZ91"/>
<dbReference type="STRING" id="272943.RSP_0960"/>
<dbReference type="EnsemblBacteria" id="ABA80143">
    <property type="protein sequence ID" value="ABA80143"/>
    <property type="gene ID" value="RSP_0960"/>
</dbReference>
<dbReference type="GeneID" id="3720751"/>
<dbReference type="KEGG" id="rsp:RSP_0960"/>
<dbReference type="PATRIC" id="fig|272943.9.peg.2932"/>
<dbReference type="eggNOG" id="COG0604">
    <property type="taxonomic scope" value="Bacteria"/>
</dbReference>
<dbReference type="OrthoDB" id="9790818at2"/>
<dbReference type="PhylomeDB" id="Q3IZ91"/>
<dbReference type="BRENDA" id="1.3.1.85">
    <property type="organism ID" value="5383"/>
</dbReference>
<dbReference type="Proteomes" id="UP000002703">
    <property type="component" value="Chromosome 1"/>
</dbReference>
<dbReference type="GO" id="GO:0043880">
    <property type="term" value="F:crotonyl-CoA reductase activity"/>
    <property type="evidence" value="ECO:0007669"/>
    <property type="project" value="InterPro"/>
</dbReference>
<dbReference type="CDD" id="cd08246">
    <property type="entry name" value="crotonyl_coA_red"/>
    <property type="match status" value="1"/>
</dbReference>
<dbReference type="Gene3D" id="3.90.180.10">
    <property type="entry name" value="Medium-chain alcohol dehydrogenases, catalytic domain"/>
    <property type="match status" value="1"/>
</dbReference>
<dbReference type="Gene3D" id="3.40.50.720">
    <property type="entry name" value="NAD(P)-binding Rossmann-like Domain"/>
    <property type="match status" value="1"/>
</dbReference>
<dbReference type="InterPro" id="IPR013149">
    <property type="entry name" value="ADH-like_C"/>
</dbReference>
<dbReference type="InterPro" id="IPR013154">
    <property type="entry name" value="ADH-like_N"/>
</dbReference>
<dbReference type="InterPro" id="IPR010085">
    <property type="entry name" value="Crot_CoA_red"/>
</dbReference>
<dbReference type="InterPro" id="IPR011032">
    <property type="entry name" value="GroES-like_sf"/>
</dbReference>
<dbReference type="InterPro" id="IPR036291">
    <property type="entry name" value="NAD(P)-bd_dom_sf"/>
</dbReference>
<dbReference type="InterPro" id="IPR020843">
    <property type="entry name" value="PKS_ER"/>
</dbReference>
<dbReference type="InterPro" id="IPR051603">
    <property type="entry name" value="Zinc-ADH_QOR/CCCR"/>
</dbReference>
<dbReference type="NCBIfam" id="TIGR01751">
    <property type="entry name" value="crot-CoA-red"/>
    <property type="match status" value="1"/>
</dbReference>
<dbReference type="PANTHER" id="PTHR44154">
    <property type="entry name" value="QUINONE OXIDOREDUCTASE"/>
    <property type="match status" value="1"/>
</dbReference>
<dbReference type="PANTHER" id="PTHR44154:SF1">
    <property type="entry name" value="QUINONE OXIDOREDUCTASE"/>
    <property type="match status" value="1"/>
</dbReference>
<dbReference type="Pfam" id="PF08240">
    <property type="entry name" value="ADH_N"/>
    <property type="match status" value="1"/>
</dbReference>
<dbReference type="Pfam" id="PF00107">
    <property type="entry name" value="ADH_zinc_N"/>
    <property type="match status" value="1"/>
</dbReference>
<dbReference type="SMART" id="SM00829">
    <property type="entry name" value="PKS_ER"/>
    <property type="match status" value="1"/>
</dbReference>
<dbReference type="SUPFAM" id="SSF50129">
    <property type="entry name" value="GroES-like"/>
    <property type="match status" value="1"/>
</dbReference>
<dbReference type="SUPFAM" id="SSF51735">
    <property type="entry name" value="NAD(P)-binding Rossmann-fold domains"/>
    <property type="match status" value="1"/>
</dbReference>
<evidence type="ECO:0000269" key="1">
    <source>
    </source>
</evidence>
<evidence type="ECO:0000269" key="2">
    <source>
    </source>
</evidence>
<evidence type="ECO:0000269" key="3">
    <source>
    </source>
</evidence>
<evidence type="ECO:0000269" key="4">
    <source>
    </source>
</evidence>
<evidence type="ECO:0000303" key="5">
    <source>
    </source>
</evidence>
<evidence type="ECO:0000305" key="6"/>
<evidence type="ECO:0000305" key="7">
    <source>
    </source>
</evidence>
<protein>
    <recommendedName>
        <fullName evidence="5">Crotonyl-CoA carboxylase/reductase</fullName>
        <ecNumber evidence="1 2 3">1.3.1.85</ecNumber>
    </recommendedName>
</protein>
<keyword id="KW-0521">NADP</keyword>
<keyword id="KW-0560">Oxidoreductase</keyword>
<keyword id="KW-1185">Reference proteome</keyword>
<feature type="chain" id="PRO_0000420613" description="Crotonyl-CoA carboxylase/reductase">
    <location>
        <begin position="1"/>
        <end position="430"/>
    </location>
</feature>
<gene>
    <name evidence="5" type="primary">ccr</name>
    <name type="ordered locus">RHOS4_25750</name>
    <name type="ORF">RSP_0960</name>
</gene>
<organism>
    <name type="scientific">Cereibacter sphaeroides (strain ATCC 17023 / DSM 158 / JCM 6121 / CCUG 31486 / LMG 2827 / NBRC 12203 / NCIMB 8253 / ATH 2.4.1.)</name>
    <name type="common">Rhodobacter sphaeroides</name>
    <dbReference type="NCBI Taxonomy" id="272943"/>
    <lineage>
        <taxon>Bacteria</taxon>
        <taxon>Pseudomonadati</taxon>
        <taxon>Pseudomonadota</taxon>
        <taxon>Alphaproteobacteria</taxon>
        <taxon>Rhodobacterales</taxon>
        <taxon>Paracoccaceae</taxon>
        <taxon>Cereibacter</taxon>
    </lineage>
</organism>
<comment type="function">
    <text evidence="1 2 3 4">Catalyzes the NADPH-dependent reductive carboxylation of crotonyl-CoA ((2E)-butenoyl-CoA) to (2S)-ethylmalonyl-CoA, in the presence of CO2 (PubMed:17548827, PubMed:18819910, PubMed:19458256). This is a key reaction in the ethylmalonyl-CoA pathway for acetyl-CoA assimilation required for R.sphaeroides growth on acetate as sole carbon source (PubMed:17548827, PubMed:22056933). Is also able to accept acryloyl-CoA as an alternative substrate, yielding (2S)-methylmalonyl-CoA (PubMed:18819910, PubMed:19458256). To a lesser extent, when CO2 is absent, the enzyme also catalyzes the reduction of crotonyl-CoA to butanoyl-CoA (PubMed:17548827, PubMed:19458256).</text>
</comment>
<comment type="catalytic activity">
    <reaction evidence="1 2 3">
        <text>(2S)-ethylmalonyl-CoA + NADP(+) = (2E)-butenoyl-CoA + CO2 + NADPH</text>
        <dbReference type="Rhea" id="RHEA:28082"/>
        <dbReference type="ChEBI" id="CHEBI:16526"/>
        <dbReference type="ChEBI" id="CHEBI:57332"/>
        <dbReference type="ChEBI" id="CHEBI:57783"/>
        <dbReference type="ChEBI" id="CHEBI:58349"/>
        <dbReference type="ChEBI" id="CHEBI:60909"/>
        <dbReference type="EC" id="1.3.1.85"/>
    </reaction>
    <physiologicalReaction direction="right-to-left" evidence="7">
        <dbReference type="Rhea" id="RHEA:28084"/>
    </physiologicalReaction>
</comment>
<comment type="catalytic activity">
    <reaction evidence="2 3">
        <text>(S)-methylmalonyl-CoA + NADP(+) = acryloyl-CoA + CO2 + NADPH</text>
        <dbReference type="Rhea" id="RHEA:60252"/>
        <dbReference type="ChEBI" id="CHEBI:16526"/>
        <dbReference type="ChEBI" id="CHEBI:57327"/>
        <dbReference type="ChEBI" id="CHEBI:57367"/>
        <dbReference type="ChEBI" id="CHEBI:57783"/>
        <dbReference type="ChEBI" id="CHEBI:58349"/>
    </reaction>
</comment>
<comment type="catalytic activity">
    <reaction evidence="1">
        <text>butanoyl-CoA + NADP(+) = (2E)-butenoyl-CoA + NADPH + H(+)</text>
        <dbReference type="Rhea" id="RHEA:27906"/>
        <dbReference type="ChEBI" id="CHEBI:15378"/>
        <dbReference type="ChEBI" id="CHEBI:57332"/>
        <dbReference type="ChEBI" id="CHEBI:57371"/>
        <dbReference type="ChEBI" id="CHEBI:57783"/>
        <dbReference type="ChEBI" id="CHEBI:58349"/>
    </reaction>
</comment>
<comment type="cofactor">
    <text evidence="1">Despite some sequence similarity to zinc-containing alcohol dehydrogenases, this enzyme does not bind any metals.</text>
</comment>
<comment type="biophysicochemical properties">
    <kinetics>
        <KM evidence="1 3">0.4 mM for (2E)-butenoyl-CoA (in the reductive carboxylation assay)</KM>
        <KM evidence="1 3">0.7 mM for NADPH (in the reductive carboxylation assay)</KM>
        <KM evidence="1 3">0.2 mM for CO2</KM>
        <KM evidence="1">0.2 mM for ethylmalonyl-CoA (in the oxidative decarboxylation assay)</KM>
        <KM evidence="3">0.5 mM for acryloyl-CoA (in the reductive carboxylation assay)</KM>
        <KM evidence="3">0.2 mM for (2E)-butenoyl-CoA (in the reduction assay to butanoyl-CoA)</KM>
        <Vmax evidence="1">130.0 umol/min/mg enzyme for the reductive carboxylation of (2E)-butenoyl-CoA</Vmax>
        <Vmax evidence="1">12.0 umol/min/mg enzyme for the oxidative decarboxylation of ethylmalonyl-CoA</Vmax>
        <Vmax evidence="1">10.0 umol/min/mg enzyme for the reduction of (2E)-butenoyl-CoA to butanoyl-CoA</Vmax>
        <text evidence="1 3">kcat is 104 sec(-1) for the reductive carboxylation of (2E)-butenoyl-CoA (PubMed:17548827). Acryloyl-CoA is accepted as an alternative substrate analog by the enzyme with 40% relative activity (compared with Vmax of crotonyl-CoA carboxylation) (PubMed:19458256).</text>
    </kinetics>
    <phDependence>
        <text evidence="3">Optimum pH is 7.5-8.0.</text>
    </phDependence>
</comment>
<comment type="subunit">
    <text evidence="1">Homodimer.</text>
</comment>
<comment type="induction">
    <text evidence="1">Down-regulated in cells grown photoheterotrophically with succinate.</text>
</comment>
<comment type="disruption phenotype">
    <text evidence="4">No effect during photoheterotrophic (anaerobic/light) growth on succinate or 3-hydroxypropionate, no growth on acetate under the same conditions.</text>
</comment>
<comment type="similarity">
    <text evidence="6">Belongs to the zinc-containing alcohol dehydrogenase family. Crotonyl-CoA carboxylase/reductase subfamily.</text>
</comment>
<accession>Q3IZ91</accession>
<accession>B8XVS5</accession>